<keyword id="KW-0903">Direct protein sequencing</keyword>
<keyword id="KW-0873">Pyrrolidone carboxylic acid</keyword>
<keyword id="KW-0964">Secreted</keyword>
<accession>P86298</accession>
<sequence>QKKDKKD</sequence>
<name>TLP1_PHONI</name>
<feature type="peptide" id="PRO_0000402811" description="Tachykinin-like peptide-I" evidence="2">
    <location>
        <begin position="1"/>
        <end position="7"/>
    </location>
</feature>
<feature type="modified residue" description="Pyrrolidone carboxylic acid" evidence="2">
    <location>
        <position position="1"/>
    </location>
</feature>
<comment type="subcellular location">
    <subcellularLocation>
        <location evidence="2">Secreted</location>
    </subcellularLocation>
</comment>
<comment type="tissue specificity">
    <text evidence="2">Expressed by the venom gland.</text>
</comment>
<comment type="mass spectrometry"/>
<comment type="similarity">
    <text evidence="1">Belongs to the tachykinin family.</text>
</comment>
<evidence type="ECO:0000255" key="1"/>
<evidence type="ECO:0000269" key="2">
    <source>
    </source>
</evidence>
<evidence type="ECO:0000303" key="3">
    <source>
    </source>
</evidence>
<evidence type="ECO:0000305" key="4"/>
<evidence type="ECO:0000305" key="5">
    <source>
    </source>
</evidence>
<proteinExistence type="evidence at protein level"/>
<dbReference type="GO" id="GO:0005576">
    <property type="term" value="C:extracellular region"/>
    <property type="evidence" value="ECO:0000314"/>
    <property type="project" value="UniProtKB"/>
</dbReference>
<organism>
    <name type="scientific">Phoneutria nigriventer</name>
    <name type="common">Brazilian armed spider</name>
    <name type="synonym">Ctenus nigriventer</name>
    <dbReference type="NCBI Taxonomy" id="6918"/>
    <lineage>
        <taxon>Eukaryota</taxon>
        <taxon>Metazoa</taxon>
        <taxon>Ecdysozoa</taxon>
        <taxon>Arthropoda</taxon>
        <taxon>Chelicerata</taxon>
        <taxon>Arachnida</taxon>
        <taxon>Araneae</taxon>
        <taxon>Araneomorphae</taxon>
        <taxon>Entelegynae</taxon>
        <taxon>Lycosoidea</taxon>
        <taxon>Ctenidae</taxon>
        <taxon>Phoneutria</taxon>
    </lineage>
</organism>
<protein>
    <recommendedName>
        <fullName evidence="5">Tachykinin-like peptide-I</fullName>
    </recommendedName>
    <alternativeName>
        <fullName evidence="3">P.nigriventer tachykinin peptides I</fullName>
        <shortName evidence="3">PnTkP-I</shortName>
    </alternativeName>
    <alternativeName>
        <fullName evidence="4">U29-ctenitoxin-Pn1a</fullName>
        <shortName evidence="4">U29-CNTX-Pn1a</shortName>
    </alternativeName>
</protein>
<reference evidence="4" key="1">
    <citation type="journal article" date="2005" name="Rapid Commun. Mass Spectrom.">
        <title>Electrospray ionization quadrupole time-of-flight and matrix-assisted laser desorption/ionization tandem time-of-flight mass spectrometric analyses to solve micro-heterogeneity in post-translationally modified peptides from Phoneutria nigriventer (Aranea, Ctenidae) venom.</title>
        <authorList>
            <person name="Pimenta A.M.C."/>
            <person name="Rates B."/>
            <person name="Bloch C. Jr."/>
            <person name="Gomes P.C."/>
            <person name="Santoro M.M."/>
            <person name="de Lima M.E."/>
            <person name="Richardson M."/>
            <person name="Cordeiro M.N."/>
        </authorList>
    </citation>
    <scope>PROTEIN SEQUENCE</scope>
    <scope>SUBCELLULAR LOCATION</scope>
    <scope>TISSUE SPECIFICITY</scope>
    <scope>MASS SPECTROMETRY</scope>
    <scope>PYROGLUTAMATE FORMATION AT GLN-1</scope>
    <source>
        <tissue evidence="2">Venom</tissue>
    </source>
</reference>